<organism>
    <name type="scientific">Saccharomyces cerevisiae (strain AWRI796)</name>
    <name type="common">Baker's yeast</name>
    <dbReference type="NCBI Taxonomy" id="764097"/>
    <lineage>
        <taxon>Eukaryota</taxon>
        <taxon>Fungi</taxon>
        <taxon>Dikarya</taxon>
        <taxon>Ascomycota</taxon>
        <taxon>Saccharomycotina</taxon>
        <taxon>Saccharomycetes</taxon>
        <taxon>Saccharomycetales</taxon>
        <taxon>Saccharomycetaceae</taxon>
        <taxon>Saccharomyces</taxon>
    </lineage>
</organism>
<accession>E7KIY3</accession>
<dbReference type="EMBL" id="ADVS01000048">
    <property type="protein sequence ID" value="EGA72616.1"/>
    <property type="molecule type" value="Genomic_DNA"/>
</dbReference>
<dbReference type="SMR" id="E7KIY3"/>
<dbReference type="HOGENOM" id="CLU_1088044_0_0_1"/>
<dbReference type="OrthoDB" id="4043735at2759"/>
<dbReference type="GO" id="GO:0005823">
    <property type="term" value="C:central plaque of spindle pole body"/>
    <property type="evidence" value="ECO:0007669"/>
    <property type="project" value="InterPro"/>
</dbReference>
<dbReference type="GO" id="GO:0005737">
    <property type="term" value="C:cytoplasm"/>
    <property type="evidence" value="ECO:0007669"/>
    <property type="project" value="UniProtKB-KW"/>
</dbReference>
<dbReference type="GO" id="GO:0005634">
    <property type="term" value="C:nucleus"/>
    <property type="evidence" value="ECO:0007669"/>
    <property type="project" value="UniProtKB-SubCell"/>
</dbReference>
<dbReference type="GO" id="GO:0005200">
    <property type="term" value="F:structural constituent of cytoskeleton"/>
    <property type="evidence" value="ECO:0007669"/>
    <property type="project" value="InterPro"/>
</dbReference>
<dbReference type="GO" id="GO:0030474">
    <property type="term" value="P:spindle pole body duplication"/>
    <property type="evidence" value="ECO:0007669"/>
    <property type="project" value="InterPro"/>
</dbReference>
<dbReference type="InterPro" id="IPR031392">
    <property type="entry name" value="Spc29"/>
</dbReference>
<dbReference type="Pfam" id="PF17082">
    <property type="entry name" value="Spc29"/>
    <property type="match status" value="1"/>
</dbReference>
<proteinExistence type="inferred from homology"/>
<protein>
    <recommendedName>
        <fullName>Spindle pole component 29</fullName>
    </recommendedName>
</protein>
<comment type="function">
    <text evidence="1">Component of the spindle pole body (SPB) required for the proper execution of spindle pole body (SPB) duplication. Links the central plaque component SPC42 to the inner plaque component SPC110 (By similarity).</text>
</comment>
<comment type="subunit">
    <text evidence="1">Component of the SPC110 complex containing at least CMD1, SPC29, SPC42 and SCP110. Interacts with BBP1.</text>
</comment>
<comment type="subcellular location">
    <subcellularLocation>
        <location evidence="1">Nucleus</location>
    </subcellularLocation>
    <subcellularLocation>
        <location evidence="1">Cytoplasm</location>
        <location evidence="1">Cytoskeleton</location>
        <location evidence="1">Microtubule organizing center</location>
        <location evidence="1">Spindle pole body</location>
    </subcellularLocation>
</comment>
<comment type="PTM">
    <text evidence="1">MPS1-mediated phosphorylation at Thr-240 is required for spindle pole body duplication.</text>
</comment>
<comment type="similarity">
    <text evidence="4">Belongs to the SPC29 family.</text>
</comment>
<keyword id="KW-0963">Cytoplasm</keyword>
<keyword id="KW-0206">Cytoskeleton</keyword>
<keyword id="KW-0539">Nucleus</keyword>
<keyword id="KW-0597">Phosphoprotein</keyword>
<reference key="1">
    <citation type="journal article" date="2011" name="PLoS Genet.">
        <title>Whole-genome comparison reveals novel genetic elements that characterize the genome of industrial strains of Saccharomyces cerevisiae.</title>
        <authorList>
            <person name="Borneman A.R."/>
            <person name="Desany B.A."/>
            <person name="Riches D."/>
            <person name="Affourtit J.P."/>
            <person name="Forgan A.H."/>
            <person name="Pretorius I.S."/>
            <person name="Egholm M."/>
            <person name="Chambers P.J."/>
        </authorList>
    </citation>
    <scope>NUCLEOTIDE SEQUENCE [LARGE SCALE GENOMIC DNA]</scope>
    <source>
        <strain>AWRI796</strain>
    </source>
</reference>
<gene>
    <name type="primary">SPC29</name>
    <name type="synonym">LPH3</name>
    <name type="synonym">NIP29</name>
    <name type="ORF">AWRI796_4878</name>
</gene>
<feature type="chain" id="PRO_0000409193" description="Spindle pole component 29">
    <location>
        <begin position="1"/>
        <end position="255"/>
    </location>
</feature>
<feature type="region of interest" description="Disordered" evidence="3">
    <location>
        <begin position="1"/>
        <end position="20"/>
    </location>
</feature>
<feature type="region of interest" description="Disordered" evidence="3">
    <location>
        <begin position="31"/>
        <end position="123"/>
    </location>
</feature>
<feature type="region of interest" description="Disordered" evidence="3">
    <location>
        <begin position="210"/>
        <end position="231"/>
    </location>
</feature>
<feature type="compositionally biased region" description="Polar residues" evidence="3">
    <location>
        <begin position="1"/>
        <end position="12"/>
    </location>
</feature>
<feature type="compositionally biased region" description="Basic and acidic residues" evidence="3">
    <location>
        <begin position="69"/>
        <end position="91"/>
    </location>
</feature>
<feature type="compositionally biased region" description="Basic and acidic residues" evidence="3">
    <location>
        <begin position="211"/>
        <end position="231"/>
    </location>
</feature>
<feature type="modified residue" description="Phosphothreonine" evidence="2">
    <location>
        <position position="18"/>
    </location>
</feature>
<feature type="modified residue" description="Phosphoserine" evidence="2">
    <location>
        <position position="65"/>
    </location>
</feature>
<feature type="modified residue" description="Phosphothreonine; by MPS1" evidence="2">
    <location>
        <position position="240"/>
    </location>
</feature>
<name>SPC29_YEASA</name>
<sequence>MDYSNFGNSASKKFQDDTLNRVRKEHEEALKKLREENFSSNTSELGNKKHYRAQERMSSPLHRLSPTGKSDDRKVKSPLDDKLRRQLREGNTRLPPPPFSSYGMPPTNRSNLDRIRRRTSSPVRTDKFASQNVIDDQRLEIKYLERIVYDQGTVIDNLTSRITRLESFILNSISDRGDKNFASLEHSRSFSGFPTNKTYGLQMGGLYENDMPYRRSSDNINKEGAREDRSSQIHIENESTEDILKNIVFVFSQLN</sequence>
<evidence type="ECO:0000250" key="1"/>
<evidence type="ECO:0000250" key="2">
    <source>
        <dbReference type="UniProtKB" id="P33419"/>
    </source>
</evidence>
<evidence type="ECO:0000256" key="3">
    <source>
        <dbReference type="SAM" id="MobiDB-lite"/>
    </source>
</evidence>
<evidence type="ECO:0000305" key="4"/>